<sequence length="383" mass="42422">MVWCCRPLLRKYGNFIDNLRIYVKGGAGGMGLPRLGGQGGKGGDVKLVAKKEVTLKKIKDKFPHKRFIGGVGGNSSVRALKGQPGEVCQVEVPSGIVITTEHGVKIGELDKEGDEIRVARGGQGGVFQTDFLPSKGQKRIIHLDLKLISDVGLVGFPNAGKSSLLSRISHAKPQVAEYAFTTVKPELGRIMYPDYKQISVADLPGLIEGAHYNRGMGHKFLKHIERTRQLLFVVDVAGFQLSASTLYRSAFETVLLLTLELQLYKQELLDKPALLAVNKMDLPNANEKFEELLKQLENPAGNFHLLPDELVPERPIEFKHIIPVSAATGQGLENLIGCIRKTMDEQADMEIRELAQERLQSLQKETSRTVKRNLKNSPQRTHH</sequence>
<organism>
    <name type="scientific">Xenopus tropicalis</name>
    <name type="common">Western clawed frog</name>
    <name type="synonym">Silurana tropicalis</name>
    <dbReference type="NCBI Taxonomy" id="8364"/>
    <lineage>
        <taxon>Eukaryota</taxon>
        <taxon>Metazoa</taxon>
        <taxon>Chordata</taxon>
        <taxon>Craniata</taxon>
        <taxon>Vertebrata</taxon>
        <taxon>Euteleostomi</taxon>
        <taxon>Amphibia</taxon>
        <taxon>Batrachia</taxon>
        <taxon>Anura</taxon>
        <taxon>Pipoidea</taxon>
        <taxon>Pipidae</taxon>
        <taxon>Xenopodinae</taxon>
        <taxon>Xenopus</taxon>
        <taxon>Silurana</taxon>
    </lineage>
</organism>
<keyword id="KW-0342">GTP-binding</keyword>
<keyword id="KW-0547">Nucleotide-binding</keyword>
<keyword id="KW-0539">Nucleus</keyword>
<keyword id="KW-1185">Reference proteome</keyword>
<keyword id="KW-0690">Ribosome biogenesis</keyword>
<comment type="function">
    <text evidence="1">May be involved in the ribosome maturation process.</text>
</comment>
<comment type="subcellular location">
    <subcellularLocation>
        <location>Nucleus</location>
        <location>Nucleolus</location>
    </subcellularLocation>
    <text evidence="1">Found in the dense fibrillar compartment region of the nucleolus.</text>
</comment>
<comment type="similarity">
    <text evidence="2">Belongs to the TRAFAC class OBG-HflX-like GTPase superfamily. OBG GTPase family.</text>
</comment>
<proteinExistence type="evidence at transcript level"/>
<name>GTPBA_XENTR</name>
<reference key="1">
    <citation type="submission" date="2004-12" db="EMBL/GenBank/DDBJ databases">
        <authorList>
            <consortium name="NIH - Xenopus Gene Collection (XGC) project"/>
        </authorList>
    </citation>
    <scope>NUCLEOTIDE SEQUENCE [LARGE SCALE MRNA]</scope>
</reference>
<protein>
    <recommendedName>
        <fullName>GTP-binding protein 10</fullName>
    </recommendedName>
</protein>
<feature type="chain" id="PRO_0000312634" description="GTP-binding protein 10">
    <location>
        <begin position="1"/>
        <end position="383"/>
    </location>
</feature>
<feature type="domain" description="Obg" evidence="3">
    <location>
        <begin position="13"/>
        <end position="148"/>
    </location>
</feature>
<feature type="domain" description="OBG-type G" evidence="2">
    <location>
        <begin position="149"/>
        <end position="344"/>
    </location>
</feature>
<feature type="region of interest" description="Disordered" evidence="4">
    <location>
        <begin position="362"/>
        <end position="383"/>
    </location>
</feature>
<feature type="compositionally biased region" description="Basic residues" evidence="4">
    <location>
        <begin position="369"/>
        <end position="383"/>
    </location>
</feature>
<feature type="binding site" evidence="2">
    <location>
        <begin position="155"/>
        <end position="162"/>
    </location>
    <ligand>
        <name>GTP</name>
        <dbReference type="ChEBI" id="CHEBI:37565"/>
    </ligand>
</feature>
<feature type="binding site" evidence="2">
    <location>
        <begin position="202"/>
        <end position="206"/>
    </location>
    <ligand>
        <name>GTP</name>
        <dbReference type="ChEBI" id="CHEBI:37565"/>
    </ligand>
</feature>
<feature type="binding site" evidence="2">
    <location>
        <begin position="278"/>
        <end position="281"/>
    </location>
    <ligand>
        <name>GTP</name>
        <dbReference type="ChEBI" id="CHEBI:37565"/>
    </ligand>
</feature>
<dbReference type="EMBL" id="BC087811">
    <property type="protein sequence ID" value="AAH87811.1"/>
    <property type="molecule type" value="mRNA"/>
</dbReference>
<dbReference type="RefSeq" id="NP_001011239.1">
    <property type="nucleotide sequence ID" value="NM_001011239.1"/>
</dbReference>
<dbReference type="SMR" id="Q5M8V6"/>
<dbReference type="FunCoup" id="Q5M8V6">
    <property type="interactions" value="1684"/>
</dbReference>
<dbReference type="STRING" id="8364.ENSXETP00000012720"/>
<dbReference type="PaxDb" id="8364-ENSXETP00000016187"/>
<dbReference type="DNASU" id="496681"/>
<dbReference type="GeneID" id="496681"/>
<dbReference type="KEGG" id="xtr:496681"/>
<dbReference type="AGR" id="Xenbase:XB-GENE-5853231"/>
<dbReference type="CTD" id="85865"/>
<dbReference type="Xenbase" id="XB-GENE-5853231">
    <property type="gene designation" value="gtpbp10"/>
</dbReference>
<dbReference type="eggNOG" id="KOG1489">
    <property type="taxonomic scope" value="Eukaryota"/>
</dbReference>
<dbReference type="HOGENOM" id="CLU_011747_2_3_1"/>
<dbReference type="InParanoid" id="Q5M8V6"/>
<dbReference type="OMA" id="VFMVDIF"/>
<dbReference type="OrthoDB" id="347018at2759"/>
<dbReference type="PhylomeDB" id="Q5M8V6"/>
<dbReference type="TreeFam" id="TF314774"/>
<dbReference type="Proteomes" id="UP000008143">
    <property type="component" value="Chromosome 6"/>
</dbReference>
<dbReference type="GO" id="GO:0005730">
    <property type="term" value="C:nucleolus"/>
    <property type="evidence" value="ECO:0007669"/>
    <property type="project" value="UniProtKB-SubCell"/>
</dbReference>
<dbReference type="GO" id="GO:0005525">
    <property type="term" value="F:GTP binding"/>
    <property type="evidence" value="ECO:0007669"/>
    <property type="project" value="UniProtKB-KW"/>
</dbReference>
<dbReference type="GO" id="GO:0003924">
    <property type="term" value="F:GTPase activity"/>
    <property type="evidence" value="ECO:0007669"/>
    <property type="project" value="InterPro"/>
</dbReference>
<dbReference type="GO" id="GO:0000287">
    <property type="term" value="F:magnesium ion binding"/>
    <property type="evidence" value="ECO:0007669"/>
    <property type="project" value="InterPro"/>
</dbReference>
<dbReference type="GO" id="GO:0042254">
    <property type="term" value="P:ribosome biogenesis"/>
    <property type="evidence" value="ECO:0007669"/>
    <property type="project" value="UniProtKB-KW"/>
</dbReference>
<dbReference type="CDD" id="cd01898">
    <property type="entry name" value="Obg"/>
    <property type="match status" value="1"/>
</dbReference>
<dbReference type="FunFam" id="3.40.50.300:FF:001339">
    <property type="entry name" value="Mitochondrial ribosome-associated GTPase 2"/>
    <property type="match status" value="1"/>
</dbReference>
<dbReference type="Gene3D" id="2.70.210.12">
    <property type="entry name" value="GTP1/OBG domain"/>
    <property type="match status" value="1"/>
</dbReference>
<dbReference type="Gene3D" id="3.40.50.300">
    <property type="entry name" value="P-loop containing nucleotide triphosphate hydrolases"/>
    <property type="match status" value="1"/>
</dbReference>
<dbReference type="InterPro" id="IPR031167">
    <property type="entry name" value="G_OBG"/>
</dbReference>
<dbReference type="InterPro" id="IPR006073">
    <property type="entry name" value="GTP-bd"/>
</dbReference>
<dbReference type="InterPro" id="IPR014100">
    <property type="entry name" value="GTP-bd_Obg/CgtA"/>
</dbReference>
<dbReference type="InterPro" id="IPR006169">
    <property type="entry name" value="GTP1_OBG_dom"/>
</dbReference>
<dbReference type="InterPro" id="IPR036726">
    <property type="entry name" value="GTP1_OBG_dom_sf"/>
</dbReference>
<dbReference type="InterPro" id="IPR045086">
    <property type="entry name" value="OBG_GTPase"/>
</dbReference>
<dbReference type="InterPro" id="IPR027417">
    <property type="entry name" value="P-loop_NTPase"/>
</dbReference>
<dbReference type="PANTHER" id="PTHR11702">
    <property type="entry name" value="DEVELOPMENTALLY REGULATED GTP-BINDING PROTEIN-RELATED"/>
    <property type="match status" value="1"/>
</dbReference>
<dbReference type="PANTHER" id="PTHR11702:SF43">
    <property type="entry name" value="GTP-BINDING PROTEIN 10"/>
    <property type="match status" value="1"/>
</dbReference>
<dbReference type="Pfam" id="PF01018">
    <property type="entry name" value="GTP1_OBG"/>
    <property type="match status" value="1"/>
</dbReference>
<dbReference type="Pfam" id="PF01926">
    <property type="entry name" value="MMR_HSR1"/>
    <property type="match status" value="1"/>
</dbReference>
<dbReference type="PIRSF" id="PIRSF002401">
    <property type="entry name" value="GTP_bd_Obg/CgtA"/>
    <property type="match status" value="1"/>
</dbReference>
<dbReference type="PRINTS" id="PR00326">
    <property type="entry name" value="GTP1OBG"/>
</dbReference>
<dbReference type="SUPFAM" id="SSF82051">
    <property type="entry name" value="Obg GTP-binding protein N-terminal domain"/>
    <property type="match status" value="1"/>
</dbReference>
<dbReference type="SUPFAM" id="SSF52540">
    <property type="entry name" value="P-loop containing nucleoside triphosphate hydrolases"/>
    <property type="match status" value="1"/>
</dbReference>
<dbReference type="PROSITE" id="PS51710">
    <property type="entry name" value="G_OBG"/>
    <property type="match status" value="1"/>
</dbReference>
<dbReference type="PROSITE" id="PS51883">
    <property type="entry name" value="OBG"/>
    <property type="match status" value="1"/>
</dbReference>
<accession>Q5M8V6</accession>
<gene>
    <name type="primary">gtpbp10</name>
</gene>
<evidence type="ECO:0000250" key="1"/>
<evidence type="ECO:0000255" key="2">
    <source>
        <dbReference type="PROSITE-ProRule" id="PRU01047"/>
    </source>
</evidence>
<evidence type="ECO:0000255" key="3">
    <source>
        <dbReference type="PROSITE-ProRule" id="PRU01231"/>
    </source>
</evidence>
<evidence type="ECO:0000256" key="4">
    <source>
        <dbReference type="SAM" id="MobiDB-lite"/>
    </source>
</evidence>